<name>TPS4_MATCR</name>
<comment type="function">
    <text evidence="4">Monoterpene synthase involved in the biosynthesis of (E)-beta-ocimene as the major product and trace amounts of (Z)-beta-ocimene. Can only accept geranyl diphosphate as substrate.</text>
</comment>
<comment type="catalytic activity">
    <reaction evidence="4">
        <text>(2E)-geranyl diphosphate = (E)-beta-ocimene + diphosphate</text>
        <dbReference type="Rhea" id="RHEA:32691"/>
        <dbReference type="ChEBI" id="CHEBI:33019"/>
        <dbReference type="ChEBI" id="CHEBI:58057"/>
        <dbReference type="ChEBI" id="CHEBI:64280"/>
        <dbReference type="EC" id="4.2.3.106"/>
    </reaction>
</comment>
<comment type="cofactor">
    <cofactor evidence="1">
        <name>Mg(2+)</name>
        <dbReference type="ChEBI" id="CHEBI:18420"/>
    </cofactor>
    <cofactor evidence="1">
        <name>Mn(2+)</name>
        <dbReference type="ChEBI" id="CHEBI:29035"/>
    </cofactor>
    <text evidence="1">Binds 3 Mg(2+) or Mn(2+) ions per subunit.</text>
</comment>
<comment type="pathway">
    <text>Secondary metabolite biosynthesis; terpenoid biosynthesis.</text>
</comment>
<comment type="subcellular location">
    <subcellularLocation>
        <location evidence="3">Plastid</location>
        <location evidence="3">Chloroplast</location>
    </subcellularLocation>
</comment>
<comment type="tissue specificity">
    <text evidence="4">Highly expressed in leaves, stems and disk florets. Detected in roots.</text>
</comment>
<comment type="domain">
    <text evidence="2">The Asp-Asp-Xaa-Xaa-Asp/Glu (DDXXD/E) motif is important for the catalytic activity, presumably through binding to Mg(2+).</text>
</comment>
<comment type="similarity">
    <text evidence="5">Belongs to the terpene synthase family. Tpsb subfamily.</text>
</comment>
<evidence type="ECO:0000250" key="1">
    <source>
        <dbReference type="UniProtKB" id="A0A1C9J6A7"/>
    </source>
</evidence>
<evidence type="ECO:0000250" key="2">
    <source>
        <dbReference type="UniProtKB" id="Q40577"/>
    </source>
</evidence>
<evidence type="ECO:0000255" key="3"/>
<evidence type="ECO:0000269" key="4">
    <source>
    </source>
</evidence>
<evidence type="ECO:0000305" key="5"/>
<keyword id="KW-0150">Chloroplast</keyword>
<keyword id="KW-0456">Lyase</keyword>
<keyword id="KW-0460">Magnesium</keyword>
<keyword id="KW-0464">Manganese</keyword>
<keyword id="KW-0479">Metal-binding</keyword>
<keyword id="KW-0934">Plastid</keyword>
<keyword id="KW-0809">Transit peptide</keyword>
<sequence>MAITHYQMASFQSSFHFCMLRKTLRQKSSLHFAKRCEATNKIFQTHGSVAIYQKTLWTHDLIDGLETDFLINRKEKVNELEVNVARMFMDYENGDISNLELLELIDNIERLGLGHRFQTNMKRVLDKIATVNENSLGLKEEEEEEEEEEDNLHALSLKFRILRQSGYRVSQDFQRKFKESRGGLTGGLKELLSIYEASYLSLEGEPDLHEAKLFATEKLLKLTGHENEAMKDHVNHALDIPLYRRMLRLEARWYIDAYGKRKDANKQLLELAILDFNIVQSAHKRDLQEVSKWWEKTGLVRKLDFIRDRLMECFFWSVGMVFEPQYYTCRVELTKIATLITTIDDIYDVYGSLNELKVFTHAVKRWDINAVENMPEYLQLGFLALYNTINEMGYETLSAQGINIIPNLARVWGELLEAFLVEAEWTHNNYMPTFKDYLDNAWRSVSGMVLLTHGYFLMNQDVKDDAIESLENFHDLFKWSSMLFRLYNDLAALADEIDKDKSPNAISCYMYEHSVSEEVAREHVKTLIDKAWMKMIEARIACSEHMTDPLIDMAINLARVSSCMYQYGDGIKDPEARTKDRVMSIIIKPFDTSEIP</sequence>
<organism>
    <name type="scientific">Matricaria chamomilla var. recutita</name>
    <name type="common">German chamomile</name>
    <name type="synonym">Chamomilla recutita</name>
    <dbReference type="NCBI Taxonomy" id="127986"/>
    <lineage>
        <taxon>Eukaryota</taxon>
        <taxon>Viridiplantae</taxon>
        <taxon>Streptophyta</taxon>
        <taxon>Embryophyta</taxon>
        <taxon>Tracheophyta</taxon>
        <taxon>Spermatophyta</taxon>
        <taxon>Magnoliopsida</taxon>
        <taxon>eudicotyledons</taxon>
        <taxon>Gunneridae</taxon>
        <taxon>Pentapetalae</taxon>
        <taxon>asterids</taxon>
        <taxon>campanulids</taxon>
        <taxon>Asterales</taxon>
        <taxon>Asteraceae</taxon>
        <taxon>Asteroideae</taxon>
        <taxon>Anthemideae</taxon>
        <taxon>Matricariinae</taxon>
        <taxon>Matricaria</taxon>
    </lineage>
</organism>
<protein>
    <recommendedName>
        <fullName>(E)-beta-ocimene synthase, chloroplastic</fullName>
        <ecNumber evidence="4">4.2.3.106</ecNumber>
    </recommendedName>
    <alternativeName>
        <fullName>Terpene synthase 4</fullName>
    </alternativeName>
</protein>
<reference key="1">
    <citation type="journal article" date="2012" name="BMC Plant Biol.">
        <title>The organ-specific expression of terpene synthase genes contributes to the terpene hydrocarbon composition of chamomile essential oils.</title>
        <authorList>
            <person name="Irmisch S."/>
            <person name="Krause S.T."/>
            <person name="Kunert G."/>
            <person name="Gershenzon J."/>
            <person name="Degenhardt J."/>
            <person name="Koellner T.G."/>
        </authorList>
    </citation>
    <scope>NUCLEOTIDE SEQUENCE [MRNA]</scope>
    <scope>FUNCTION</scope>
    <scope>CATALYTIC ACTIVITY</scope>
    <scope>TISSUE SPECIFICITY</scope>
    <source>
        <strain>cv. Bodegold</strain>
    </source>
</reference>
<proteinExistence type="evidence at protein level"/>
<feature type="transit peptide" description="Chloroplast" evidence="3">
    <location>
        <begin position="1"/>
        <end position="35"/>
    </location>
</feature>
<feature type="chain" id="PRO_0000421928" description="(E)-beta-ocimene synthase, chloroplastic">
    <location>
        <begin position="36"/>
        <end position="596"/>
    </location>
</feature>
<feature type="short sequence motif" description="DDXXD motif" evidence="2">
    <location>
        <begin position="344"/>
        <end position="348"/>
    </location>
</feature>
<feature type="binding site" evidence="2">
    <location>
        <position position="307"/>
    </location>
    <ligand>
        <name>(2E)-geranyl diphosphate</name>
        <dbReference type="ChEBI" id="CHEBI:58057"/>
    </ligand>
</feature>
<feature type="binding site" evidence="2">
    <location>
        <position position="344"/>
    </location>
    <ligand>
        <name>(2E)-geranyl diphosphate</name>
        <dbReference type="ChEBI" id="CHEBI:58057"/>
    </ligand>
</feature>
<feature type="binding site" evidence="2">
    <location>
        <position position="344"/>
    </location>
    <ligand>
        <name>Mg(2+)</name>
        <dbReference type="ChEBI" id="CHEBI:18420"/>
        <label>1</label>
    </ligand>
</feature>
<feature type="binding site" evidence="2">
    <location>
        <position position="344"/>
    </location>
    <ligand>
        <name>Mg(2+)</name>
        <dbReference type="ChEBI" id="CHEBI:18420"/>
        <label>2</label>
    </ligand>
</feature>
<feature type="binding site" evidence="2">
    <location>
        <position position="348"/>
    </location>
    <ligand>
        <name>(2E)-geranyl diphosphate</name>
        <dbReference type="ChEBI" id="CHEBI:58057"/>
    </ligand>
</feature>
<feature type="binding site" evidence="2">
    <location>
        <position position="348"/>
    </location>
    <ligand>
        <name>Mg(2+)</name>
        <dbReference type="ChEBI" id="CHEBI:18420"/>
        <label>1</label>
    </ligand>
</feature>
<feature type="binding site" evidence="2">
    <location>
        <position position="348"/>
    </location>
    <ligand>
        <name>Mg(2+)</name>
        <dbReference type="ChEBI" id="CHEBI:18420"/>
        <label>2</label>
    </ligand>
</feature>
<feature type="binding site" evidence="2">
    <location>
        <position position="485"/>
    </location>
    <ligand>
        <name>(2E)-geranyl diphosphate</name>
        <dbReference type="ChEBI" id="CHEBI:58057"/>
    </ligand>
</feature>
<feature type="binding site" evidence="2">
    <location>
        <position position="488"/>
    </location>
    <ligand>
        <name>(2E)-geranyl diphosphate</name>
        <dbReference type="ChEBI" id="CHEBI:58057"/>
    </ligand>
</feature>
<feature type="binding site" evidence="2">
    <location>
        <position position="488"/>
    </location>
    <ligand>
        <name>Mg(2+)</name>
        <dbReference type="ChEBI" id="CHEBI:18420"/>
        <label>3</label>
    </ligand>
</feature>
<feature type="binding site" evidence="2">
    <location>
        <position position="492"/>
    </location>
    <ligand>
        <name>Mg(2+)</name>
        <dbReference type="ChEBI" id="CHEBI:18420"/>
        <label>3</label>
    </ligand>
</feature>
<feature type="binding site" evidence="2">
    <location>
        <position position="496"/>
    </location>
    <ligand>
        <name>Mg(2+)</name>
        <dbReference type="ChEBI" id="CHEBI:18420"/>
        <label>3</label>
    </ligand>
</feature>
<dbReference type="EC" id="4.2.3.106" evidence="4"/>
<dbReference type="EMBL" id="JQ255378">
    <property type="protein sequence ID" value="AFM43737.1"/>
    <property type="molecule type" value="mRNA"/>
</dbReference>
<dbReference type="SMR" id="I6RE61"/>
<dbReference type="UniPathway" id="UPA00213"/>
<dbReference type="GO" id="GO:0009507">
    <property type="term" value="C:chloroplast"/>
    <property type="evidence" value="ECO:0007669"/>
    <property type="project" value="UniProtKB-SubCell"/>
</dbReference>
<dbReference type="GO" id="GO:0034768">
    <property type="term" value="F:(E)-beta-ocimene synthase activity"/>
    <property type="evidence" value="ECO:0007669"/>
    <property type="project" value="UniProtKB-EC"/>
</dbReference>
<dbReference type="GO" id="GO:0000287">
    <property type="term" value="F:magnesium ion binding"/>
    <property type="evidence" value="ECO:0007669"/>
    <property type="project" value="InterPro"/>
</dbReference>
<dbReference type="GO" id="GO:0010333">
    <property type="term" value="F:terpene synthase activity"/>
    <property type="evidence" value="ECO:0007669"/>
    <property type="project" value="InterPro"/>
</dbReference>
<dbReference type="GO" id="GO:0016102">
    <property type="term" value="P:diterpenoid biosynthetic process"/>
    <property type="evidence" value="ECO:0007669"/>
    <property type="project" value="InterPro"/>
</dbReference>
<dbReference type="CDD" id="cd00684">
    <property type="entry name" value="Terpene_cyclase_plant_C1"/>
    <property type="match status" value="1"/>
</dbReference>
<dbReference type="FunFam" id="1.10.600.10:FF:000007">
    <property type="entry name" value="Isoprene synthase, chloroplastic"/>
    <property type="match status" value="1"/>
</dbReference>
<dbReference type="Gene3D" id="1.10.600.10">
    <property type="entry name" value="Farnesyl Diphosphate Synthase"/>
    <property type="match status" value="1"/>
</dbReference>
<dbReference type="Gene3D" id="1.50.10.130">
    <property type="entry name" value="Terpene synthase, N-terminal domain"/>
    <property type="match status" value="1"/>
</dbReference>
<dbReference type="InterPro" id="IPR008949">
    <property type="entry name" value="Isoprenoid_synthase_dom_sf"/>
</dbReference>
<dbReference type="InterPro" id="IPR034741">
    <property type="entry name" value="Terpene_cyclase-like_1_C"/>
</dbReference>
<dbReference type="InterPro" id="IPR044814">
    <property type="entry name" value="Terpene_cyclase_plant_C1"/>
</dbReference>
<dbReference type="InterPro" id="IPR001906">
    <property type="entry name" value="Terpene_synth_N"/>
</dbReference>
<dbReference type="InterPro" id="IPR036965">
    <property type="entry name" value="Terpene_synth_N_sf"/>
</dbReference>
<dbReference type="InterPro" id="IPR050148">
    <property type="entry name" value="Terpene_synthase-like"/>
</dbReference>
<dbReference type="InterPro" id="IPR005630">
    <property type="entry name" value="Terpene_synthase_metal-bd"/>
</dbReference>
<dbReference type="InterPro" id="IPR008930">
    <property type="entry name" value="Terpenoid_cyclase/PrenylTrfase"/>
</dbReference>
<dbReference type="PANTHER" id="PTHR31225">
    <property type="entry name" value="OS04G0344100 PROTEIN-RELATED"/>
    <property type="match status" value="1"/>
</dbReference>
<dbReference type="PANTHER" id="PTHR31225:SF252">
    <property type="entry name" value="TERPENE SYNTHASE 12-RELATED"/>
    <property type="match status" value="1"/>
</dbReference>
<dbReference type="Pfam" id="PF01397">
    <property type="entry name" value="Terpene_synth"/>
    <property type="match status" value="1"/>
</dbReference>
<dbReference type="Pfam" id="PF03936">
    <property type="entry name" value="Terpene_synth_C"/>
    <property type="match status" value="1"/>
</dbReference>
<dbReference type="SFLD" id="SFLDS00005">
    <property type="entry name" value="Isoprenoid_Synthase_Type_I"/>
    <property type="match status" value="1"/>
</dbReference>
<dbReference type="SFLD" id="SFLDG01019">
    <property type="entry name" value="Terpene_Cyclase_Like_1_C_Termi"/>
    <property type="match status" value="1"/>
</dbReference>
<dbReference type="SUPFAM" id="SSF48239">
    <property type="entry name" value="Terpenoid cyclases/Protein prenyltransferases"/>
    <property type="match status" value="1"/>
</dbReference>
<dbReference type="SUPFAM" id="SSF48576">
    <property type="entry name" value="Terpenoid synthases"/>
    <property type="match status" value="1"/>
</dbReference>
<accession>I6RE61</accession>